<comment type="function">
    <text evidence="1">Inhibits all the catalytic activities of DNA gyrase by preventing its interaction with DNA. Acts by binding directly to the C-terminal domain of GyrB, which probably disrupts DNA binding by the gyrase.</text>
</comment>
<comment type="cofactor">
    <cofactor evidence="1">
        <name>Zn(2+)</name>
        <dbReference type="ChEBI" id="CHEBI:29105"/>
    </cofactor>
    <text evidence="1">Binds 1 zinc ion.</text>
</comment>
<comment type="subunit">
    <text evidence="1">Interacts with GyrB.</text>
</comment>
<comment type="similarity">
    <text evidence="1">Belongs to the DNA gyrase inhibitor YacG family.</text>
</comment>
<proteinExistence type="inferred from homology"/>
<reference key="1">
    <citation type="journal article" date="2001" name="Nature">
        <title>Complete genome sequence of a multiple drug resistant Salmonella enterica serovar Typhi CT18.</title>
        <authorList>
            <person name="Parkhill J."/>
            <person name="Dougan G."/>
            <person name="James K.D."/>
            <person name="Thomson N.R."/>
            <person name="Pickard D."/>
            <person name="Wain J."/>
            <person name="Churcher C.M."/>
            <person name="Mungall K.L."/>
            <person name="Bentley S.D."/>
            <person name="Holden M.T.G."/>
            <person name="Sebaihia M."/>
            <person name="Baker S."/>
            <person name="Basham D."/>
            <person name="Brooks K."/>
            <person name="Chillingworth T."/>
            <person name="Connerton P."/>
            <person name="Cronin A."/>
            <person name="Davis P."/>
            <person name="Davies R.M."/>
            <person name="Dowd L."/>
            <person name="White N."/>
            <person name="Farrar J."/>
            <person name="Feltwell T."/>
            <person name="Hamlin N."/>
            <person name="Haque A."/>
            <person name="Hien T.T."/>
            <person name="Holroyd S."/>
            <person name="Jagels K."/>
            <person name="Krogh A."/>
            <person name="Larsen T.S."/>
            <person name="Leather S."/>
            <person name="Moule S."/>
            <person name="O'Gaora P."/>
            <person name="Parry C."/>
            <person name="Quail M.A."/>
            <person name="Rutherford K.M."/>
            <person name="Simmonds M."/>
            <person name="Skelton J."/>
            <person name="Stevens K."/>
            <person name="Whitehead S."/>
            <person name="Barrell B.G."/>
        </authorList>
    </citation>
    <scope>NUCLEOTIDE SEQUENCE [LARGE SCALE GENOMIC DNA]</scope>
    <source>
        <strain>CT18</strain>
    </source>
</reference>
<reference key="2">
    <citation type="journal article" date="2003" name="J. Bacteriol.">
        <title>Comparative genomics of Salmonella enterica serovar Typhi strains Ty2 and CT18.</title>
        <authorList>
            <person name="Deng W."/>
            <person name="Liou S.-R."/>
            <person name="Plunkett G. III"/>
            <person name="Mayhew G.F."/>
            <person name="Rose D.J."/>
            <person name="Burland V."/>
            <person name="Kodoyianni V."/>
            <person name="Schwartz D.C."/>
            <person name="Blattner F.R."/>
        </authorList>
    </citation>
    <scope>NUCLEOTIDE SEQUENCE [LARGE SCALE GENOMIC DNA]</scope>
    <source>
        <strain>ATCC 700931 / Ty2</strain>
    </source>
</reference>
<dbReference type="EMBL" id="AL513382">
    <property type="protein sequence ID" value="CAD01297.1"/>
    <property type="molecule type" value="Genomic_DNA"/>
</dbReference>
<dbReference type="EMBL" id="AE014613">
    <property type="protein sequence ID" value="AAO67876.1"/>
    <property type="molecule type" value="Genomic_DNA"/>
</dbReference>
<dbReference type="RefSeq" id="NP_454752.1">
    <property type="nucleotide sequence ID" value="NC_003198.1"/>
</dbReference>
<dbReference type="RefSeq" id="WP_001286419.1">
    <property type="nucleotide sequence ID" value="NZ_WSUR01000009.1"/>
</dbReference>
<dbReference type="SMR" id="P67482"/>
<dbReference type="STRING" id="220341.gene:17584199"/>
<dbReference type="KEGG" id="stt:t0144"/>
<dbReference type="KEGG" id="sty:STY0160"/>
<dbReference type="PATRIC" id="fig|220341.7.peg.160"/>
<dbReference type="eggNOG" id="COG3024">
    <property type="taxonomic scope" value="Bacteria"/>
</dbReference>
<dbReference type="HOGENOM" id="CLU_178280_3_1_6"/>
<dbReference type="OMA" id="WAAEEHK"/>
<dbReference type="OrthoDB" id="9809663at2"/>
<dbReference type="Proteomes" id="UP000000541">
    <property type="component" value="Chromosome"/>
</dbReference>
<dbReference type="Proteomes" id="UP000002670">
    <property type="component" value="Chromosome"/>
</dbReference>
<dbReference type="GO" id="GO:0008657">
    <property type="term" value="F:DNA topoisomerase type II (double strand cut, ATP-hydrolyzing) inhibitor activity"/>
    <property type="evidence" value="ECO:0007669"/>
    <property type="project" value="UniProtKB-UniRule"/>
</dbReference>
<dbReference type="GO" id="GO:0008270">
    <property type="term" value="F:zinc ion binding"/>
    <property type="evidence" value="ECO:0007669"/>
    <property type="project" value="UniProtKB-UniRule"/>
</dbReference>
<dbReference type="GO" id="GO:0006355">
    <property type="term" value="P:regulation of DNA-templated transcription"/>
    <property type="evidence" value="ECO:0007669"/>
    <property type="project" value="InterPro"/>
</dbReference>
<dbReference type="Gene3D" id="3.30.50.10">
    <property type="entry name" value="Erythroid Transcription Factor GATA-1, subunit A"/>
    <property type="match status" value="1"/>
</dbReference>
<dbReference type="HAMAP" id="MF_00649">
    <property type="entry name" value="DNA_gyrase_inhibitor_YacG"/>
    <property type="match status" value="1"/>
</dbReference>
<dbReference type="InterPro" id="IPR005584">
    <property type="entry name" value="DNA_gyrase_inhibitor_YacG"/>
</dbReference>
<dbReference type="InterPro" id="IPR013088">
    <property type="entry name" value="Znf_NHR/GATA"/>
</dbReference>
<dbReference type="NCBIfam" id="NF001638">
    <property type="entry name" value="PRK00418.1"/>
    <property type="match status" value="1"/>
</dbReference>
<dbReference type="PANTHER" id="PTHR36150">
    <property type="entry name" value="DNA GYRASE INHIBITOR YACG"/>
    <property type="match status" value="1"/>
</dbReference>
<dbReference type="PANTHER" id="PTHR36150:SF1">
    <property type="entry name" value="DNA GYRASE INHIBITOR YACG"/>
    <property type="match status" value="1"/>
</dbReference>
<dbReference type="Pfam" id="PF03884">
    <property type="entry name" value="YacG"/>
    <property type="match status" value="1"/>
</dbReference>
<dbReference type="SUPFAM" id="SSF57716">
    <property type="entry name" value="Glucocorticoid receptor-like (DNA-binding domain)"/>
    <property type="match status" value="1"/>
</dbReference>
<organism>
    <name type="scientific">Salmonella typhi</name>
    <dbReference type="NCBI Taxonomy" id="90370"/>
    <lineage>
        <taxon>Bacteria</taxon>
        <taxon>Pseudomonadati</taxon>
        <taxon>Pseudomonadota</taxon>
        <taxon>Gammaproteobacteria</taxon>
        <taxon>Enterobacterales</taxon>
        <taxon>Enterobacteriaceae</taxon>
        <taxon>Salmonella</taxon>
    </lineage>
</organism>
<name>YACG_SALTI</name>
<protein>
    <recommendedName>
        <fullName evidence="1">DNA gyrase inhibitor YacG</fullName>
    </recommendedName>
</protein>
<feature type="chain" id="PRO_0000211723" description="DNA gyrase inhibitor YacG">
    <location>
        <begin position="1"/>
        <end position="63"/>
    </location>
</feature>
<feature type="binding site" evidence="1">
    <location>
        <position position="9"/>
    </location>
    <ligand>
        <name>Zn(2+)</name>
        <dbReference type="ChEBI" id="CHEBI:29105"/>
    </ligand>
</feature>
<feature type="binding site" evidence="1">
    <location>
        <position position="12"/>
    </location>
    <ligand>
        <name>Zn(2+)</name>
        <dbReference type="ChEBI" id="CHEBI:29105"/>
    </ligand>
</feature>
<feature type="binding site" evidence="1">
    <location>
        <position position="28"/>
    </location>
    <ligand>
        <name>Zn(2+)</name>
        <dbReference type="ChEBI" id="CHEBI:29105"/>
    </ligand>
</feature>
<feature type="binding site" evidence="1">
    <location>
        <position position="32"/>
    </location>
    <ligand>
        <name>Zn(2+)</name>
        <dbReference type="ChEBI" id="CHEBI:29105"/>
    </ligand>
</feature>
<keyword id="KW-0479">Metal-binding</keyword>
<keyword id="KW-0862">Zinc</keyword>
<gene>
    <name evidence="1" type="primary">yacG</name>
    <name type="ordered locus">STY0160</name>
    <name type="ordered locus">t0144</name>
</gene>
<evidence type="ECO:0000255" key="1">
    <source>
        <dbReference type="HAMAP-Rule" id="MF_00649"/>
    </source>
</evidence>
<accession>P67482</accession>
<accession>Q8XFY1</accession>
<sequence>MSDVTVVNCPTCGKPVVWGEISPFRPFCSKRCQLIDLGEWAAEEKRIASSGDQSDSDDWSEER</sequence>